<evidence type="ECO:0000255" key="1">
    <source>
        <dbReference type="HAMAP-Rule" id="MF_01161"/>
    </source>
</evidence>
<keyword id="KW-0067">ATP-binding</keyword>
<keyword id="KW-0963">Cytoplasm</keyword>
<keyword id="KW-0436">Ligase</keyword>
<keyword id="KW-0547">Nucleotide-binding</keyword>
<keyword id="KW-0819">tRNA processing</keyword>
<feature type="chain" id="PRO_0000181797" description="tRNA(Ile)-lysidine synthase">
    <location>
        <begin position="1"/>
        <end position="407"/>
    </location>
</feature>
<feature type="binding site" evidence="1">
    <location>
        <begin position="36"/>
        <end position="41"/>
    </location>
    <ligand>
        <name>ATP</name>
        <dbReference type="ChEBI" id="CHEBI:30616"/>
    </ligand>
</feature>
<name>TILS_TROW8</name>
<dbReference type="EC" id="6.3.4.19" evidence="1"/>
<dbReference type="EMBL" id="BX251410">
    <property type="protein sequence ID" value="CAD66850.1"/>
    <property type="molecule type" value="Genomic_DNA"/>
</dbReference>
<dbReference type="RefSeq" id="WP_011096131.1">
    <property type="nucleotide sequence ID" value="NC_004551.1"/>
</dbReference>
<dbReference type="SMR" id="Q83I94"/>
<dbReference type="GeneID" id="67387949"/>
<dbReference type="KEGG" id="tws:TW171"/>
<dbReference type="HOGENOM" id="CLU_018869_1_0_11"/>
<dbReference type="GO" id="GO:0005737">
    <property type="term" value="C:cytoplasm"/>
    <property type="evidence" value="ECO:0007669"/>
    <property type="project" value="UniProtKB-SubCell"/>
</dbReference>
<dbReference type="GO" id="GO:0005524">
    <property type="term" value="F:ATP binding"/>
    <property type="evidence" value="ECO:0007669"/>
    <property type="project" value="UniProtKB-UniRule"/>
</dbReference>
<dbReference type="GO" id="GO:0032267">
    <property type="term" value="F:tRNA(Ile)-lysidine synthase activity"/>
    <property type="evidence" value="ECO:0007669"/>
    <property type="project" value="UniProtKB-EC"/>
</dbReference>
<dbReference type="GO" id="GO:0006400">
    <property type="term" value="P:tRNA modification"/>
    <property type="evidence" value="ECO:0007669"/>
    <property type="project" value="UniProtKB-UniRule"/>
</dbReference>
<dbReference type="CDD" id="cd01992">
    <property type="entry name" value="TilS_N"/>
    <property type="match status" value="1"/>
</dbReference>
<dbReference type="Gene3D" id="1.20.59.20">
    <property type="match status" value="1"/>
</dbReference>
<dbReference type="Gene3D" id="3.40.50.620">
    <property type="entry name" value="HUPs"/>
    <property type="match status" value="1"/>
</dbReference>
<dbReference type="HAMAP" id="MF_01161">
    <property type="entry name" value="tRNA_Ile_lys_synt"/>
    <property type="match status" value="1"/>
</dbReference>
<dbReference type="InterPro" id="IPR014729">
    <property type="entry name" value="Rossmann-like_a/b/a_fold"/>
</dbReference>
<dbReference type="InterPro" id="IPR011063">
    <property type="entry name" value="TilS/TtcA_N"/>
</dbReference>
<dbReference type="InterPro" id="IPR012094">
    <property type="entry name" value="tRNA_Ile_lys_synt"/>
</dbReference>
<dbReference type="InterPro" id="IPR012795">
    <property type="entry name" value="tRNA_Ile_lys_synt_N"/>
</dbReference>
<dbReference type="NCBIfam" id="TIGR02432">
    <property type="entry name" value="lysidine_TilS_N"/>
    <property type="match status" value="1"/>
</dbReference>
<dbReference type="PANTHER" id="PTHR43033">
    <property type="entry name" value="TRNA(ILE)-LYSIDINE SYNTHASE-RELATED"/>
    <property type="match status" value="1"/>
</dbReference>
<dbReference type="PANTHER" id="PTHR43033:SF1">
    <property type="entry name" value="TRNA(ILE)-LYSIDINE SYNTHASE-RELATED"/>
    <property type="match status" value="1"/>
</dbReference>
<dbReference type="Pfam" id="PF01171">
    <property type="entry name" value="ATP_bind_3"/>
    <property type="match status" value="2"/>
</dbReference>
<dbReference type="SUPFAM" id="SSF52402">
    <property type="entry name" value="Adenine nucleotide alpha hydrolases-like"/>
    <property type="match status" value="1"/>
</dbReference>
<dbReference type="SUPFAM" id="SSF82829">
    <property type="entry name" value="MesJ substrate recognition domain-like"/>
    <property type="match status" value="1"/>
</dbReference>
<comment type="function">
    <text evidence="1">Ligates lysine onto the cytidine present at position 34 of the AUA codon-specific tRNA(Ile) that contains the anticodon CAU, in an ATP-dependent manner. Cytidine is converted to lysidine, thus changing the amino acid specificity of the tRNA from methionine to isoleucine.</text>
</comment>
<comment type="catalytic activity">
    <reaction evidence="1">
        <text>cytidine(34) in tRNA(Ile2) + L-lysine + ATP = lysidine(34) in tRNA(Ile2) + AMP + diphosphate + H(+)</text>
        <dbReference type="Rhea" id="RHEA:43744"/>
        <dbReference type="Rhea" id="RHEA-COMP:10625"/>
        <dbReference type="Rhea" id="RHEA-COMP:10670"/>
        <dbReference type="ChEBI" id="CHEBI:15378"/>
        <dbReference type="ChEBI" id="CHEBI:30616"/>
        <dbReference type="ChEBI" id="CHEBI:32551"/>
        <dbReference type="ChEBI" id="CHEBI:33019"/>
        <dbReference type="ChEBI" id="CHEBI:82748"/>
        <dbReference type="ChEBI" id="CHEBI:83665"/>
        <dbReference type="ChEBI" id="CHEBI:456215"/>
        <dbReference type="EC" id="6.3.4.19"/>
    </reaction>
</comment>
<comment type="subcellular location">
    <subcellularLocation>
        <location evidence="1">Cytoplasm</location>
    </subcellularLocation>
</comment>
<comment type="domain">
    <text>The N-terminal region contains the highly conserved SGGXDS motif, predicted to be a P-loop motif involved in ATP binding.</text>
</comment>
<comment type="similarity">
    <text evidence="1">Belongs to the tRNA(Ile)-lysidine synthase family.</text>
</comment>
<proteinExistence type="inferred from homology"/>
<reference key="1">
    <citation type="journal article" date="2003" name="Lancet">
        <title>Sequencing and analysis of the genome of the Whipple's disease bacterium Tropheryma whipplei.</title>
        <authorList>
            <person name="Bentley S.D."/>
            <person name="Maiwald M."/>
            <person name="Murphy L.D."/>
            <person name="Pallen M.J."/>
            <person name="Yeats C.A."/>
            <person name="Dover L.G."/>
            <person name="Norbertczak H.T."/>
            <person name="Besra G.S."/>
            <person name="Quail M.A."/>
            <person name="Harris D.E."/>
            <person name="von Herbay A."/>
            <person name="Goble A."/>
            <person name="Rutter S."/>
            <person name="Squares R."/>
            <person name="Squares S."/>
            <person name="Barrell B.G."/>
            <person name="Parkhill J."/>
            <person name="Relman D.A."/>
        </authorList>
    </citation>
    <scope>NUCLEOTIDE SEQUENCE [LARGE SCALE GENOMIC DNA]</scope>
    <source>
        <strain>TW08/27</strain>
    </source>
</reference>
<protein>
    <recommendedName>
        <fullName evidence="1">tRNA(Ile)-lysidine synthase</fullName>
        <ecNumber evidence="1">6.3.4.19</ecNumber>
    </recommendedName>
    <alternativeName>
        <fullName evidence="1">tRNA(Ile)-2-lysyl-cytidine synthase</fullName>
    </alternativeName>
    <alternativeName>
        <fullName evidence="1">tRNA(Ile)-lysidine synthetase</fullName>
    </alternativeName>
</protein>
<sequence>MLHRPRITPAVANARRAMLNTLPADLHNQLVLIALSGGRDSLAAMVIASWVIPRLNGRVGAVVVDHGLQENSARIADEVRIRAEQFALNPILIKRVSPSRVSAGPEASARIARYAAFYDTLEETKAYAIILAHTLDDQAETVLLGLMRGSGPSSLRGMKAVSYTPEDCRYMNNKACNSVTAVYAHNTQRCSCDSRPYPPPPEPRNENRSYFPHPSCKCVEGSATRFTNADIDSRFGVFIRPFLDITRHETGKICEFYGLDYWNDPHNEDVRFSRVRIRHNVMPVLENEIGPGVKYALSRTAKLAQLDTEYLDHLSNELLDEIASKESDWSIRLPINTLQKTPVPIRLRVIRLAALQYFTVSLSFKHTRQIERLLCSSCDIKHVNLPRLITAQRVGNYIYMHTLRGKL</sequence>
<gene>
    <name evidence="1" type="primary">tilS</name>
    <name type="ordered locus">TW171</name>
</gene>
<organism>
    <name type="scientific">Tropheryma whipplei (strain TW08/27)</name>
    <name type="common">Whipple's bacillus</name>
    <dbReference type="NCBI Taxonomy" id="218496"/>
    <lineage>
        <taxon>Bacteria</taxon>
        <taxon>Bacillati</taxon>
        <taxon>Actinomycetota</taxon>
        <taxon>Actinomycetes</taxon>
        <taxon>Micrococcales</taxon>
        <taxon>Tropherymataceae</taxon>
        <taxon>Tropheryma</taxon>
    </lineage>
</organism>
<accession>Q83I94</accession>